<accession>Q6GZM7</accession>
<reference key="1">
    <citation type="journal article" date="2004" name="Virology">
        <title>Comparative genomic analyses of frog virus 3, type species of the genus Ranavirus (family Iridoviridae).</title>
        <authorList>
            <person name="Tan W.G."/>
            <person name="Barkman T.J."/>
            <person name="Gregory Chinchar V."/>
            <person name="Essani K."/>
        </authorList>
    </citation>
    <scope>NUCLEOTIDE SEQUENCE [LARGE SCALE GENOMIC DNA]</scope>
</reference>
<gene>
    <name type="ORF">FV3-098R</name>
</gene>
<feature type="chain" id="PRO_0000410569" description="Uncharacterized protein 098R">
    <location>
        <begin position="1"/>
        <end position="66"/>
    </location>
</feature>
<protein>
    <recommendedName>
        <fullName>Uncharacterized protein 098R</fullName>
    </recommendedName>
</protein>
<name>098R_FRG3G</name>
<keyword id="KW-1185">Reference proteome</keyword>
<organism>
    <name type="scientific">Frog virus 3 (isolate Goorha)</name>
    <name type="common">FV-3</name>
    <dbReference type="NCBI Taxonomy" id="654924"/>
    <lineage>
        <taxon>Viruses</taxon>
        <taxon>Varidnaviria</taxon>
        <taxon>Bamfordvirae</taxon>
        <taxon>Nucleocytoviricota</taxon>
        <taxon>Megaviricetes</taxon>
        <taxon>Pimascovirales</taxon>
        <taxon>Iridoviridae</taxon>
        <taxon>Alphairidovirinae</taxon>
        <taxon>Ranavirus</taxon>
        <taxon>Frog virus 3</taxon>
    </lineage>
</organism>
<organismHost>
    <name type="scientific">Dryophytes versicolor</name>
    <name type="common">chameleon treefrog</name>
    <dbReference type="NCBI Taxonomy" id="30343"/>
</organismHost>
<organismHost>
    <name type="scientific">Lithobates pipiens</name>
    <name type="common">Northern leopard frog</name>
    <name type="synonym">Rana pipiens</name>
    <dbReference type="NCBI Taxonomy" id="8404"/>
</organismHost>
<organismHost>
    <name type="scientific">Lithobates sylvaticus</name>
    <name type="common">Wood frog</name>
    <name type="synonym">Rana sylvatica</name>
    <dbReference type="NCBI Taxonomy" id="45438"/>
</organismHost>
<organismHost>
    <name type="scientific">Notophthalmus viridescens</name>
    <name type="common">Eastern newt</name>
    <name type="synonym">Triturus viridescens</name>
    <dbReference type="NCBI Taxonomy" id="8316"/>
</organismHost>
<sequence length="66" mass="7786">MLNYIHQLVKPQRICTFASVAWTAQCTRVSSIHWRAGKSFTFQNQPKWKSLAFWRAQKAWLHSHNG</sequence>
<proteinExistence type="predicted"/>
<dbReference type="EMBL" id="AY548484">
    <property type="protein sequence ID" value="AAT09758.1"/>
    <property type="molecule type" value="Genomic_DNA"/>
</dbReference>
<dbReference type="RefSeq" id="YP_031677.1">
    <property type="nucleotide sequence ID" value="NC_005946.1"/>
</dbReference>
<dbReference type="KEGG" id="vg:2947791"/>
<dbReference type="Proteomes" id="UP000008770">
    <property type="component" value="Segment"/>
</dbReference>